<reference key="1">
    <citation type="journal article" date="1992" name="J. Biol. Chem.">
        <title>CDC14 of Saccharomyces cerevisiae. Cloning, sequence analysis, and transcription during the cell cycle.</title>
        <authorList>
            <person name="Wan J."/>
            <person name="Xu H."/>
            <person name="Grunstein M."/>
        </authorList>
    </citation>
    <scope>NUCLEOTIDE SEQUENCE [GENOMIC DNA]</scope>
</reference>
<reference key="2">
    <citation type="journal article" date="1996" name="Mol. Gen. Genet.">
        <title>Dominant mutant alleles of yeast protein kinase gene CDC15 suppress the lte1 defect in termination of M phase and genetically interact with CDC14.</title>
        <authorList>
            <person name="Shirayama M."/>
            <person name="Matsui Y."/>
            <person name="Toh-e A."/>
        </authorList>
    </citation>
    <scope>NUCLEOTIDE SEQUENCE [GENOMIC DNA]</scope>
    <scope>FUNCTION</scope>
</reference>
<reference key="3">
    <citation type="journal article" date="1995" name="Nat. Genet.">
        <title>Analysis of the nucleotide sequence of chromosome VI from Saccharomyces cerevisiae.</title>
        <authorList>
            <person name="Murakami Y."/>
            <person name="Naitou M."/>
            <person name="Hagiwara H."/>
            <person name="Shibata T."/>
            <person name="Ozawa M."/>
            <person name="Sasanuma S."/>
            <person name="Sasanuma M."/>
            <person name="Tsuchiya Y."/>
            <person name="Soeda E."/>
            <person name="Yokoyama K."/>
            <person name="Yamazaki M."/>
            <person name="Tashiro H."/>
            <person name="Eki T."/>
        </authorList>
    </citation>
    <scope>NUCLEOTIDE SEQUENCE [LARGE SCALE GENOMIC DNA]</scope>
    <source>
        <strain>ATCC 204508 / S288c</strain>
    </source>
</reference>
<reference key="4">
    <citation type="journal article" date="2014" name="G3 (Bethesda)">
        <title>The reference genome sequence of Saccharomyces cerevisiae: Then and now.</title>
        <authorList>
            <person name="Engel S.R."/>
            <person name="Dietrich F.S."/>
            <person name="Fisk D.G."/>
            <person name="Binkley G."/>
            <person name="Balakrishnan R."/>
            <person name="Costanzo M.C."/>
            <person name="Dwight S.S."/>
            <person name="Hitz B.C."/>
            <person name="Karra K."/>
            <person name="Nash R.S."/>
            <person name="Weng S."/>
            <person name="Wong E.D."/>
            <person name="Lloyd P."/>
            <person name="Skrzypek M.S."/>
            <person name="Miyasato S.R."/>
            <person name="Simison M."/>
            <person name="Cherry J.M."/>
        </authorList>
    </citation>
    <scope>GENOME REANNOTATION</scope>
    <source>
        <strain>ATCC 204508 / S288c</strain>
    </source>
</reference>
<reference key="5">
    <citation type="journal article" date="1996" name="Yeast">
        <title>Fifteen open reading frames in a 30.8 kb region of the right arm of chromosome VI from Saccharomyces cerevisiae.</title>
        <authorList>
            <person name="Eki T."/>
            <person name="Naitou M."/>
            <person name="Hagiwara H."/>
            <person name="Abe M."/>
            <person name="Ozawa M."/>
            <person name="Sasanuma S."/>
            <person name="Sasanuma M."/>
            <person name="Tsuchiya Y."/>
            <person name="Shibata T."/>
            <person name="Watanabe K."/>
            <person name="Ono A."/>
            <person name="Yamazaki M."/>
            <person name="Tashiro H."/>
            <person name="Hanaoka F."/>
            <person name="Murakami Y."/>
        </authorList>
    </citation>
    <scope>NUCLEOTIDE SEQUENCE [GENOMIC DNA]</scope>
    <source>
        <strain>ATCC 204511 / S288c / AB972</strain>
    </source>
</reference>
<reference key="6">
    <citation type="submission" date="1993-08" db="EMBL/GenBank/DDBJ databases">
        <authorList>
            <person name="Mai B."/>
            <person name="Lipp M."/>
        </authorList>
    </citation>
    <scope>NUCLEOTIDE SEQUENCE [GENOMIC DNA] OF 1-421</scope>
</reference>
<reference key="7">
    <citation type="journal article" date="1980" name="Genetics">
        <title>Diploid spore formation and other meiotic effects of two cell-division-cycle mutations of Saccharomyces cerevisiae.</title>
        <authorList>
            <person name="Schild D."/>
            <person name="Byers B."/>
        </authorList>
    </citation>
    <scope>FUNCTION</scope>
</reference>
<reference key="8">
    <citation type="journal article" date="1997" name="J. Biol. Chem.">
        <title>The activity of Cdc14p, an oligomeric dual specificity protein phosphatase from Saccharomyces cerevisiae, is required for cell cycle progression.</title>
        <authorList>
            <person name="Taylor G.S."/>
            <person name="Liu Y."/>
            <person name="Baskerville C."/>
            <person name="Charbonneau H."/>
        </authorList>
    </citation>
    <scope>CATALYTIC ACTIVITY</scope>
    <scope>BIOPHYSICOCHEMICAL PROPERTIES</scope>
    <scope>FUNCTION</scope>
</reference>
<reference key="9">
    <citation type="journal article" date="1998" name="Mol. Cell">
        <title>The phosphatase Cdc14 triggers mitotic exit by reversal of Cdk-dependent phosphorylation.</title>
        <authorList>
            <person name="Visintin R."/>
            <person name="Craig K."/>
            <person name="Hwang E.S."/>
            <person name="Prinz S."/>
            <person name="Tyers M."/>
            <person name="Amon A."/>
        </authorList>
    </citation>
    <scope>INTERACTION WITH SIC1</scope>
    <scope>FUNCTION IN DEPHOSPHORYLATION OF CDH1; SIC1 AND SWI5</scope>
</reference>
<reference key="10">
    <citation type="journal article" date="2001" name="Mol. Cell">
        <title>Net1 stimulates RNA polymerase I transcription and regulates nucleolar structure independently of controlling mitotic exit.</title>
        <authorList>
            <person name="Shou W."/>
            <person name="Sakamoto K.M."/>
            <person name="Keener J."/>
            <person name="Morimoto K.W."/>
            <person name="Traverso E.E."/>
            <person name="Azzam R."/>
            <person name="Hoppe G.J."/>
            <person name="Feldman R.M.R."/>
            <person name="DeModena J."/>
            <person name="Moazed D."/>
            <person name="Charbonneau H."/>
            <person name="Nomura M."/>
            <person name="Deshaies R.J."/>
        </authorList>
    </citation>
    <scope>FUNCTION</scope>
    <scope>SUBUNIT</scope>
</reference>
<reference key="11">
    <citation type="journal article" date="2003" name="Dev. Cell">
        <title>The Cdc14 phosphatase and the FEAR network control meiotic spindle disassembly and chromosome segregation.</title>
        <authorList>
            <person name="Marston A.L."/>
            <person name="Lee B.H."/>
            <person name="Amon A."/>
        </authorList>
    </citation>
    <scope>FUNCTION</scope>
    <scope>SUBCELLULAR LOCATION</scope>
</reference>
<reference key="12">
    <citation type="journal article" date="2003" name="Nature">
        <title>Global analysis of protein expression in yeast.</title>
        <authorList>
            <person name="Ghaemmaghami S."/>
            <person name="Huh W.-K."/>
            <person name="Bower K."/>
            <person name="Howson R.W."/>
            <person name="Belle A."/>
            <person name="Dephoure N."/>
            <person name="O'Shea E.K."/>
            <person name="Weissman J.S."/>
        </authorList>
    </citation>
    <scope>LEVEL OF PROTEIN EXPRESSION [LARGE SCALE ANALYSIS]</scope>
</reference>
<reference key="13">
    <citation type="journal article" date="2004" name="Cell">
        <title>Cdc14 and condensin control the dissolution of cohesin-independent chromosome linkages at repeated DNA.</title>
        <authorList>
            <person name="D'Amours D."/>
            <person name="Stegmeier F."/>
            <person name="Amon A."/>
        </authorList>
    </citation>
    <scope>FUNCTION</scope>
</reference>
<reference key="14">
    <citation type="journal article" date="2004" name="Cell Cycle">
        <title>Nucleolar segregation lags behind the rest of the genome and requires Cdc14p activation by the FEAR network.</title>
        <authorList>
            <person name="Torres-Rosell J."/>
            <person name="Machin F."/>
            <person name="Jarmuz A."/>
            <person name="Aragon L."/>
        </authorList>
    </citation>
    <scope>FUNCTION</scope>
</reference>
<reference key="15">
    <citation type="journal article" date="2004" name="Cell Cycle">
        <title>Cdc14p/FEAR pathway controls segregation of nucleolus in S. cerevisiae by facilitating condensin targeting to rDNA chromatin in anaphase.</title>
        <authorList>
            <person name="Wang B.D."/>
            <person name="Yong-Gonzalez V."/>
            <person name="Strunnikov A.V."/>
        </authorList>
    </citation>
    <scope>FUNCTION</scope>
</reference>
<reference key="16">
    <citation type="journal article" date="2004" name="J. Biol. Chem.">
        <title>Kinetic and mechanistic studies of a cell cycle protein phosphatase Cdc14.</title>
        <authorList>
            <person name="Wang W.Q."/>
            <person name="Bembenek J."/>
            <person name="Gee K.R."/>
            <person name="Yu H."/>
            <person name="Charbonneau H."/>
            <person name="Zhang Z.Y."/>
        </authorList>
    </citation>
    <scope>CATALYTIC ACTIVITY</scope>
</reference>
<reference key="17">
    <citation type="journal article" date="2004" name="Mol. Cell. Biol.">
        <title>Clb6/Cdc28 and Cdc14 regulate phosphorylation status and cellular localization of Swi6.</title>
        <authorList>
            <person name="Geymonat M."/>
            <person name="Spanos A."/>
            <person name="Wells G.P."/>
            <person name="Smerdon S.J."/>
            <person name="Sedgwick S.G."/>
        </authorList>
    </citation>
    <scope>FUNCTION IN DEPHOSPHORYLATION OF SWI6</scope>
</reference>
<reference key="18">
    <citation type="journal article" date="2004" name="Science">
        <title>Phosphorylation by cyclin B-Cdk underlies release of mitotic exit activator Cdc14 from the nucleolus.</title>
        <authorList>
            <person name="Azzam R."/>
            <person name="Chen S.L."/>
            <person name="Shou W."/>
            <person name="Mah A.S."/>
            <person name="Alexandru G."/>
            <person name="Nasmyth K."/>
            <person name="Annan R.S."/>
            <person name="Carr S.A."/>
            <person name="Deshaies R.J."/>
        </authorList>
    </citation>
    <scope>SUBCELLULAR LOCATION</scope>
</reference>
<reference key="19">
    <citation type="journal article" date="2005" name="Cell Cycle">
        <title>Crm1-mediated nuclear export of Cdc14 is required for the completion of cytokinesis in budding yeast.</title>
        <authorList>
            <person name="Bembenek J."/>
            <person name="Kang J."/>
            <person name="Kurischko C."/>
            <person name="Li B."/>
            <person name="Raab J.R."/>
            <person name="Belanger K.D."/>
            <person name="Luca F.C."/>
            <person name="Yu H."/>
        </authorList>
    </citation>
    <scope>SUBCELLULAR LOCATION</scope>
    <scope>INTERACTION WITH CRM1</scope>
    <scope>FUNCTION</scope>
</reference>
<reference key="20">
    <citation type="journal article" date="2007" name="J. Proteome Res.">
        <title>Large-scale phosphorylation analysis of alpha-factor-arrested Saccharomyces cerevisiae.</title>
        <authorList>
            <person name="Li X."/>
            <person name="Gerber S.A."/>
            <person name="Rudner A.D."/>
            <person name="Beausoleil S.A."/>
            <person name="Haas W."/>
            <person name="Villen J."/>
            <person name="Elias J.E."/>
            <person name="Gygi S.P."/>
        </authorList>
    </citation>
    <scope>PHOSPHORYLATION [LARGE SCALE ANALYSIS] AT SER-467</scope>
    <scope>IDENTIFICATION BY MASS SPECTROMETRY [LARGE SCALE ANALYSIS]</scope>
    <source>
        <strain>ADR376</strain>
    </source>
</reference>
<reference key="21">
    <citation type="journal article" date="2007" name="Mol. Cell. Biol.">
        <title>Novel role for Cdc14 sequestration: Cdc14 dephosphorylates factors that promote DNA replication.</title>
        <authorList>
            <person name="Bloom J."/>
            <person name="Cross F.R."/>
        </authorList>
    </citation>
    <scope>FUNCTION IN DEPHOSPHORYLATION OF DBP2; SIC1 AND SLD2</scope>
</reference>
<reference key="22">
    <citation type="journal article" date="2008" name="Cell Cycle">
        <title>Assembling the spindle midzone in the right place at the right time.</title>
        <authorList>
            <person name="Khmelinskii A."/>
            <person name="Schiebel E."/>
        </authorList>
    </citation>
    <scope>FUNCTION IN DEPHOSPHORYLATION OF ASE1</scope>
</reference>
<reference key="23">
    <citation type="journal article" date="2008" name="Cell Cycle">
        <title>The Polo-like kinase Cdc5 interacts with FEAR network components and Cdc14.</title>
        <authorList>
            <person name="Rahal R."/>
            <person name="Amon A."/>
        </authorList>
    </citation>
    <scope>SUBCELLULAR LOCATION</scope>
    <scope>INTERACTION WITH CDC5</scope>
</reference>
<reference key="24">
    <citation type="journal article" date="2008" name="Curr. Biol.">
        <title>A nucleolus-localized activator of Cdc14 phosphatase supports rDNA segregation in yeast mitosis.</title>
        <authorList>
            <person name="Geil C."/>
            <person name="Schwab M."/>
            <person name="Seufert W."/>
        </authorList>
    </citation>
    <scope>SUBCELLULAR LOCATION</scope>
    <scope>FUNCTION</scope>
    <scope>INTERACTION WITH TOF2</scope>
</reference>
<reference key="25">
    <citation type="journal article" date="2008" name="J. Biol. Chem.">
        <title>Cdc28 and Cdc14 control stability of the anaphase-promoting complex inhibitor Acm1.</title>
        <authorList>
            <person name="Hall M.C."/>
            <person name="Jeong D.E."/>
            <person name="Henderson J.T."/>
            <person name="Choi E."/>
            <person name="Bremmer S.C."/>
            <person name="Iliuk A.B."/>
            <person name="Charbonneau H."/>
        </authorList>
    </citation>
    <scope>FUNCTION IN DEPHOSPHORYLATION OF ACM1</scope>
</reference>
<reference key="26">
    <citation type="journal article" date="2008" name="J. Cell Biol.">
        <title>Regulation of Sli15/INCENP, kinetochore, and Cdc14 phosphatase functions by the ribosome biogenesis protein Utp7.</title>
        <authorList>
            <person name="Jwa M."/>
            <person name="Kim J.H."/>
            <person name="Chan C.S."/>
        </authorList>
    </citation>
    <scope>SUBCELLULAR LOCATION</scope>
    <scope>INTERACTION WITH UTP7</scope>
</reference>
<reference key="27">
    <citation type="journal article" date="2008" name="Mol. Cell. Proteomics">
        <title>A multidimensional chromatography technology for in-depth phosphoproteome analysis.</title>
        <authorList>
            <person name="Albuquerque C.P."/>
            <person name="Smolka M.B."/>
            <person name="Payne S.H."/>
            <person name="Bafna V."/>
            <person name="Eng J."/>
            <person name="Zhou H."/>
        </authorList>
    </citation>
    <scope>IDENTIFICATION BY MASS SPECTROMETRY [LARGE SCALE ANALYSIS]</scope>
</reference>
<reference key="28">
    <citation type="journal article" date="2009" name="J. Cell Biol.">
        <title>Dbf2-Mob1 drives relocalization of protein phosphatase Cdc14 to the cytoplasm during exit from mitosis.</title>
        <authorList>
            <person name="Mohl D.A."/>
            <person name="Huddleston M.J."/>
            <person name="Collingwood T.S."/>
            <person name="Annan R.S."/>
            <person name="Deshaies R.J."/>
        </authorList>
    </citation>
    <scope>SUBCELLULAR LOCATION</scope>
</reference>
<reference key="29">
    <citation type="journal article" date="2009" name="Mol. Biol. Cell">
        <title>Cdc14 inhibition by the spindle assembly checkpoint prevents unscheduled centrosome separation in budding yeast.</title>
        <authorList>
            <person name="Chiroli E."/>
            <person name="Rancati G."/>
            <person name="Catusi I."/>
            <person name="Lucchini G."/>
            <person name="Piatti S."/>
        </authorList>
    </citation>
    <scope>FUNCTION</scope>
</reference>
<reference key="30">
    <citation type="journal article" date="2009" name="Nature">
        <title>Cdc14 inhibits transcription by RNA polymerase I during anaphase.</title>
        <authorList>
            <person name="Clemente-Blanco A."/>
            <person name="Mayan-Santos M."/>
            <person name="Schneider D.A."/>
            <person name="Machin F."/>
            <person name="Jarmuz A."/>
            <person name="Tschochner H."/>
            <person name="Aragon L."/>
        </authorList>
    </citation>
    <scope>FUNCTION</scope>
</reference>
<reference key="31">
    <citation type="journal article" date="2009" name="Science">
        <title>Global analysis of Cdk1 substrate phosphorylation sites provides insights into evolution.</title>
        <authorList>
            <person name="Holt L.J."/>
            <person name="Tuch B.B."/>
            <person name="Villen J."/>
            <person name="Johnson A.D."/>
            <person name="Gygi S.P."/>
            <person name="Morgan D.O."/>
        </authorList>
    </citation>
    <scope>PHOSPHORYLATION [LARGE SCALE ANALYSIS] AT SER-467</scope>
    <scope>IDENTIFICATION BY MASS SPECTROMETRY [LARGE SCALE ANALYSIS]</scope>
</reference>
<reference key="32">
    <citation type="journal article" date="2010" name="Curr. Biol.">
        <title>Sli15(INCENP) dephosphorylation prevents mitotic checkpoint reengagement due to loss of tension at anaphase onset.</title>
        <authorList>
            <person name="Mirchenko L."/>
            <person name="Uhlmann F."/>
        </authorList>
    </citation>
    <scope>FUNCTION IN DEPHOSPHORYLATION OF INCENP</scope>
</reference>
<reference key="33">
    <citation type="journal article" date="2010" name="Genetics">
        <title>Cdc14-dependent dephosphorylation of a kinetochore protein prior to anaphase in Saccharomyces cerevisiae.</title>
        <authorList>
            <person name="Akiyoshi B."/>
            <person name="Biggins S."/>
        </authorList>
    </citation>
    <scope>FUNCTION IN DEPHOSPHORYLATION OF DSN1</scope>
</reference>
<reference key="34">
    <citation type="journal article" date="2010" name="J. Cell Biol.">
        <title>Oscillations in Cdc14 release and sequestration reveal a circuit underlying mitotic exit.</title>
        <authorList>
            <person name="Manzoni R."/>
            <person name="Montani F."/>
            <person name="Visintin C."/>
            <person name="Caudron F."/>
            <person name="Ciliberto A."/>
            <person name="Visintin R."/>
        </authorList>
    </citation>
    <scope>FUNCTION</scope>
    <scope>SUBCELLULAR LOCATION</scope>
</reference>
<reference key="35">
    <citation type="journal article" date="2010" name="J. Cell Biol.">
        <title>The RSC chromatin-remodeling complex influences mitotic exit and adaptation to the spindle assembly checkpoint by controlling the Cdc14 phosphatase.</title>
        <authorList>
            <person name="Rossio V."/>
            <person name="Galati E."/>
            <person name="Ferrari M."/>
            <person name="Pellicioli A."/>
            <person name="Sutani T."/>
            <person name="Shirahige K."/>
            <person name="Lucchini G."/>
            <person name="Piatti S."/>
        </authorList>
    </citation>
    <scope>SUBCELLULAR LOCATION</scope>
</reference>
<reference key="36">
    <citation type="journal article" date="2010" name="J. Cell Sci.">
        <title>Cdc14p resets the competency of replication licensing by dephosphorylating multiple initiation proteins during mitotic exit in budding yeast.</title>
        <authorList>
            <person name="Zhai Y."/>
            <person name="Yung P.Y."/>
            <person name="Huo L."/>
            <person name="Liang C."/>
        </authorList>
    </citation>
    <scope>FUNCTION IN DEPHOSPHORYLATION OF ORC2; ORC6; CDC6 AND MCM3</scope>
</reference>
<reference key="37">
    <citation type="journal article" date="2011" name="Cell">
        <title>A quantitative model for ordered Cdk substrate dephosphorylation during mitotic exit.</title>
        <authorList>
            <person name="Bouchoux C."/>
            <person name="Uhlmann F."/>
        </authorList>
    </citation>
    <scope>FUNCTION</scope>
</reference>
<reference key="38">
    <citation type="journal article" date="2011" name="Fungal Genet. Biol.">
        <title>Functions of the mitotic B-type cyclins CLB1, CLB2, and CLB3 at mitotic exit antagonized by the CDC14 phosphatase.</title>
        <authorList>
            <person name="Tzeng Y.W."/>
            <person name="Huang J.N."/>
            <person name="Schuyler S.C."/>
            <person name="Wu C.H."/>
            <person name="Juang Y.L."/>
        </authorList>
    </citation>
    <scope>FUNCTION</scope>
    <scope>MUTAGENESIS OF ALA-280</scope>
</reference>
<reference key="39">
    <citation type="journal article" date="2011" name="J. Biol. Chem.">
        <title>Global analysis of Cdc14 phosphatase reveals diverse roles in mitotic processes.</title>
        <authorList>
            <person name="Bloom J."/>
            <person name="Cristea I.M."/>
            <person name="Procko A.L."/>
            <person name="Lubkov V."/>
            <person name="Chait B.T."/>
            <person name="Snyder M."/>
            <person name="Cross F.R."/>
        </authorList>
    </citation>
    <scope>MUTAGENESIS OF ASP-253 AND CYS-283</scope>
    <scope>INTERACTION WITH BNI1; BNR1 AND KAR9</scope>
    <scope>FUNCTION IN DEPHOSPHORYLATION OF BNI1; BNR1 AND KAR9</scope>
</reference>
<reference key="40">
    <citation type="journal article" date="2011" name="J. Cell Biol.">
        <title>Meiotic nuclear divisions in budding yeast require PP2A(Cdc55)-mediated antagonism of Net1 phosphorylation by Cdk.</title>
        <authorList>
            <person name="Kerr G.W."/>
            <person name="Sarkar S."/>
            <person name="Tibbles K.L."/>
            <person name="Petronczki M."/>
            <person name="Millar J.B."/>
            <person name="Arumugam P."/>
        </authorList>
    </citation>
    <scope>SUBCELLULAR LOCATION</scope>
</reference>
<reference key="41">
    <citation type="journal article" date="2011" name="J. Cell Biol.">
        <title>Cdc55 coordinates spindle assembly and chromosome disjunction during meiosis.</title>
        <authorList>
            <person name="Bizzari F."/>
            <person name="Marston A.L."/>
        </authorList>
    </citation>
    <scope>SUBCELLULAR LOCATION</scope>
    <scope>FUNCTION</scope>
</reference>
<reference key="42">
    <citation type="journal article" date="2012" name="EMBO J.">
        <title>The mitotic exit network and Cdc14 phosphatase initiate cytokinesis by counteracting CDK phosphorylations and blocking polarised growth.</title>
        <authorList>
            <person name="Sanchez-Diaz A."/>
            <person name="Nkosi P.J."/>
            <person name="Murray S."/>
            <person name="Labib K."/>
        </authorList>
    </citation>
    <scope>FUNCTION</scope>
    <scope>SUBCELLULAR LOCATION</scope>
</reference>
<reference key="43">
    <citation type="journal article" date="2012" name="J. Biol. Chem.">
        <title>Cdc14 phosphatases preferentially dephosphorylate a subset of cyclin-dependent kinase (Cdk) sites containing phosphoserine.</title>
        <authorList>
            <person name="Bremmer S.C."/>
            <person name="Hall H."/>
            <person name="Martinez J.S."/>
            <person name="Eissler C.L."/>
            <person name="Hinrichsen T.H."/>
            <person name="Rossie S."/>
            <person name="Parker L.L."/>
            <person name="Hall M.C."/>
            <person name="Charbonneau H."/>
        </authorList>
    </citation>
    <scope>FUNCTION</scope>
</reference>
<reference key="44">
    <citation type="journal article" date="2012" name="J. Cell Sci.">
        <title>Cdc14-dependent dephosphorylation of Inn1 contributes to Inn1-Cyk3 complex formation.</title>
        <authorList>
            <person name="Palani S."/>
            <person name="Meitinger F."/>
            <person name="Boehm M.E."/>
            <person name="Lehmann W.D."/>
            <person name="Pereira G."/>
        </authorList>
    </citation>
    <scope>SUBCELLULAR LOCATION</scope>
    <scope>FUNCTION IN DEPHOSPHORYLATION OF INN1</scope>
</reference>
<reference key="45">
    <citation type="journal article" date="2012" name="Mol. Biol. Cell">
        <title>Dependence of Chs2 ER export on dephosphorylation by cytoplasmic Cdc14 ensures that septum formation follows mitosis.</title>
        <authorList>
            <person name="Chin C.F."/>
            <person name="Bennett A.M."/>
            <person name="Ma W.K."/>
            <person name="Hall M.C."/>
            <person name="Yeong F.M."/>
        </authorList>
    </citation>
    <scope>FUNCTION IN DEPHOSPHORYLATION OF CHS2</scope>
</reference>
<reference key="46">
    <citation type="journal article" date="2012" name="PLoS Genet.">
        <title>Nondisjunction of a single chromosome leads to breakage and activation of DNA damage checkpoint in G2.</title>
        <authorList>
            <person name="Quevedo O."/>
            <person name="Garcia-Luis J."/>
            <person name="Matos-Perdomo E."/>
            <person name="Aragon L."/>
            <person name="Machin F."/>
        </authorList>
    </citation>
    <scope>FUNCTION</scope>
</reference>
<reference key="47">
    <citation type="journal article" date="2013" name="PLoS ONE">
        <title>The FEAR protein Slk19 restricts Cdc14 phosphatase to the nucleus until the end of anaphase, regulating its participation in mitotic exit in Saccharomyces cerevisiae.</title>
        <authorList>
            <person name="Faust A.M."/>
            <person name="Wong C.C."/>
            <person name="Yates Iii J.R."/>
            <person name="Drubin D.G."/>
            <person name="Barnes G."/>
        </authorList>
    </citation>
    <scope>SUBCELLULAR LOCATION</scope>
</reference>
<keyword id="KW-0002">3D-structure</keyword>
<keyword id="KW-0131">Cell cycle</keyword>
<keyword id="KW-0132">Cell division</keyword>
<keyword id="KW-0963">Cytoplasm</keyword>
<keyword id="KW-0378">Hydrolase</keyword>
<keyword id="KW-0469">Meiosis</keyword>
<keyword id="KW-0498">Mitosis</keyword>
<keyword id="KW-0539">Nucleus</keyword>
<keyword id="KW-0597">Phosphoprotein</keyword>
<keyword id="KW-0904">Protein phosphatase</keyword>
<keyword id="KW-1185">Reference proteome</keyword>
<organism>
    <name type="scientific">Saccharomyces cerevisiae (strain ATCC 204508 / S288c)</name>
    <name type="common">Baker's yeast</name>
    <dbReference type="NCBI Taxonomy" id="559292"/>
    <lineage>
        <taxon>Eukaryota</taxon>
        <taxon>Fungi</taxon>
        <taxon>Dikarya</taxon>
        <taxon>Ascomycota</taxon>
        <taxon>Saccharomycotina</taxon>
        <taxon>Saccharomycetes</taxon>
        <taxon>Saccharomycetales</taxon>
        <taxon>Saccharomycetaceae</taxon>
        <taxon>Saccharomyces</taxon>
    </lineage>
</organism>
<proteinExistence type="evidence at protein level"/>
<dbReference type="EC" id="3.1.3.48"/>
<dbReference type="EMBL" id="M61194">
    <property type="protein sequence ID" value="AAA34477.1"/>
    <property type="status" value="ALT_FRAME"/>
    <property type="molecule type" value="Genomic_DNA"/>
</dbReference>
<dbReference type="EMBL" id="D55715">
    <property type="protein sequence ID" value="BAA09533.1"/>
    <property type="molecule type" value="Genomic_DNA"/>
</dbReference>
<dbReference type="EMBL" id="D50617">
    <property type="protein sequence ID" value="BAA09267.1"/>
    <property type="molecule type" value="Genomic_DNA"/>
</dbReference>
<dbReference type="EMBL" id="X75077">
    <property type="protein sequence ID" value="CAA52971.1"/>
    <property type="status" value="ALT_FRAME"/>
    <property type="molecule type" value="Genomic_DNA"/>
</dbReference>
<dbReference type="EMBL" id="BK006940">
    <property type="protein sequence ID" value="DAA12468.1"/>
    <property type="molecule type" value="Genomic_DNA"/>
</dbReference>
<dbReference type="PIR" id="S56283">
    <property type="entry name" value="S56283"/>
</dbReference>
<dbReference type="RefSeq" id="NP_116684.3">
    <property type="nucleotide sequence ID" value="NM_001179993.3"/>
</dbReference>
<dbReference type="PDB" id="4ZJ7">
    <property type="method" value="X-ray"/>
    <property type="resolution" value="2.40 A"/>
    <property type="chains" value="B=517-551"/>
</dbReference>
<dbReference type="PDB" id="5XW4">
    <property type="method" value="X-ray"/>
    <property type="resolution" value="1.85 A"/>
    <property type="chains" value="A/B=1-374"/>
</dbReference>
<dbReference type="PDB" id="5XW5">
    <property type="method" value="X-ray"/>
    <property type="resolution" value="1.85 A"/>
    <property type="chains" value="A/B=1-374"/>
</dbReference>
<dbReference type="PDB" id="6G84">
    <property type="method" value="X-ray"/>
    <property type="resolution" value="2.47 A"/>
    <property type="chains" value="A/B=1-374"/>
</dbReference>
<dbReference type="PDB" id="6G85">
    <property type="method" value="X-ray"/>
    <property type="resolution" value="1.53 A"/>
    <property type="chains" value="A/B=1-374"/>
</dbReference>
<dbReference type="PDB" id="6G86">
    <property type="method" value="X-ray"/>
    <property type="resolution" value="1.74 A"/>
    <property type="chains" value="A/B=1-374"/>
</dbReference>
<dbReference type="PDBsum" id="4ZJ7"/>
<dbReference type="PDBsum" id="5XW4"/>
<dbReference type="PDBsum" id="5XW5"/>
<dbReference type="PDBsum" id="6G84"/>
<dbReference type="PDBsum" id="6G85"/>
<dbReference type="PDBsum" id="6G86"/>
<dbReference type="SMR" id="Q00684"/>
<dbReference type="BioGRID" id="31182">
    <property type="interactions" value="563"/>
</dbReference>
<dbReference type="ComplexPortal" id="CPX-1669">
    <property type="entry name" value="RENT complex"/>
</dbReference>
<dbReference type="DIP" id="DIP-5116N"/>
<dbReference type="FunCoup" id="Q00684">
    <property type="interactions" value="1227"/>
</dbReference>
<dbReference type="IntAct" id="Q00684">
    <property type="interactions" value="192"/>
</dbReference>
<dbReference type="MINT" id="Q00684"/>
<dbReference type="STRING" id="4932.YFR028C"/>
<dbReference type="iPTMnet" id="Q00684"/>
<dbReference type="PaxDb" id="4932-YFR028C"/>
<dbReference type="PeptideAtlas" id="Q00684"/>
<dbReference type="EnsemblFungi" id="YFR028C_mRNA">
    <property type="protein sequence ID" value="YFR028C"/>
    <property type="gene ID" value="YFR028C"/>
</dbReference>
<dbReference type="GeneID" id="850585"/>
<dbReference type="KEGG" id="sce:YFR028C"/>
<dbReference type="AGR" id="SGD:S000001924"/>
<dbReference type="SGD" id="S000001924">
    <property type="gene designation" value="CDC14"/>
</dbReference>
<dbReference type="VEuPathDB" id="FungiDB:YFR028C"/>
<dbReference type="eggNOG" id="KOG1720">
    <property type="taxonomic scope" value="Eukaryota"/>
</dbReference>
<dbReference type="GeneTree" id="ENSGT00940000170847"/>
<dbReference type="HOGENOM" id="CLU_017787_1_2_1"/>
<dbReference type="InParanoid" id="Q00684"/>
<dbReference type="OMA" id="ACMLCCY"/>
<dbReference type="OrthoDB" id="5632at2759"/>
<dbReference type="BioCyc" id="YEAST:G3O-30477-MONOMER"/>
<dbReference type="Reactome" id="R-SCE-176407">
    <property type="pathway name" value="Conversion from APC/C:Cdc20 to APC/C:Cdh1 in late anaphase"/>
</dbReference>
<dbReference type="Reactome" id="R-SCE-5687128">
    <property type="pathway name" value="MAPK6/MAPK4 signaling"/>
</dbReference>
<dbReference type="SABIO-RK" id="Q00684"/>
<dbReference type="BioGRID-ORCS" id="850585">
    <property type="hits" value="1 hit in 10 CRISPR screens"/>
</dbReference>
<dbReference type="CD-CODE" id="876000F7">
    <property type="entry name" value="Centrosome"/>
</dbReference>
<dbReference type="CD-CODE" id="A97FB2F6">
    <property type="entry name" value="rDNA locus"/>
</dbReference>
<dbReference type="EvolutionaryTrace" id="Q00684"/>
<dbReference type="PRO" id="PR:Q00684"/>
<dbReference type="Proteomes" id="UP000002311">
    <property type="component" value="Chromosome VI"/>
</dbReference>
<dbReference type="RNAct" id="Q00684">
    <property type="molecule type" value="protein"/>
</dbReference>
<dbReference type="GO" id="GO:0005935">
    <property type="term" value="C:cellular bud neck"/>
    <property type="evidence" value="ECO:0000314"/>
    <property type="project" value="SGD"/>
</dbReference>
<dbReference type="GO" id="GO:0005737">
    <property type="term" value="C:cytoplasm"/>
    <property type="evidence" value="ECO:0000314"/>
    <property type="project" value="SGD"/>
</dbReference>
<dbReference type="GO" id="GO:0072686">
    <property type="term" value="C:mitotic spindle"/>
    <property type="evidence" value="ECO:0000318"/>
    <property type="project" value="GO_Central"/>
</dbReference>
<dbReference type="GO" id="GO:0044732">
    <property type="term" value="C:mitotic spindle pole body"/>
    <property type="evidence" value="ECO:0000314"/>
    <property type="project" value="SGD"/>
</dbReference>
<dbReference type="GO" id="GO:0071958">
    <property type="term" value="C:new mitotic spindle pole body"/>
    <property type="evidence" value="ECO:0000314"/>
    <property type="project" value="SGD"/>
</dbReference>
<dbReference type="GO" id="GO:0005730">
    <property type="term" value="C:nucleolus"/>
    <property type="evidence" value="ECO:0000314"/>
    <property type="project" value="SGD"/>
</dbReference>
<dbReference type="GO" id="GO:0005634">
    <property type="term" value="C:nucleus"/>
    <property type="evidence" value="ECO:0000314"/>
    <property type="project" value="SGD"/>
</dbReference>
<dbReference type="GO" id="GO:0030869">
    <property type="term" value="C:RENT complex"/>
    <property type="evidence" value="ECO:0000314"/>
    <property type="project" value="SGD"/>
</dbReference>
<dbReference type="GO" id="GO:0000922">
    <property type="term" value="C:spindle pole"/>
    <property type="evidence" value="ECO:0000318"/>
    <property type="project" value="GO_Central"/>
</dbReference>
<dbReference type="GO" id="GO:0005816">
    <property type="term" value="C:spindle pole body"/>
    <property type="evidence" value="ECO:0000314"/>
    <property type="project" value="SGD"/>
</dbReference>
<dbReference type="GO" id="GO:0004721">
    <property type="term" value="F:phosphoprotein phosphatase activity"/>
    <property type="evidence" value="ECO:0000314"/>
    <property type="project" value="SGD"/>
</dbReference>
<dbReference type="GO" id="GO:0004722">
    <property type="term" value="F:protein serine/threonine phosphatase activity"/>
    <property type="evidence" value="ECO:0000314"/>
    <property type="project" value="SGD"/>
</dbReference>
<dbReference type="GO" id="GO:0004725">
    <property type="term" value="F:protein tyrosine phosphatase activity"/>
    <property type="evidence" value="ECO:0000318"/>
    <property type="project" value="GO_Central"/>
</dbReference>
<dbReference type="GO" id="GO:0000422">
    <property type="term" value="P:autophagy of mitochondrion"/>
    <property type="evidence" value="ECO:0000315"/>
    <property type="project" value="SGD"/>
</dbReference>
<dbReference type="GO" id="GO:0051301">
    <property type="term" value="P:cell division"/>
    <property type="evidence" value="ECO:0007669"/>
    <property type="project" value="UniProtKB-KW"/>
</dbReference>
<dbReference type="GO" id="GO:0071470">
    <property type="term" value="P:cellular response to osmotic stress"/>
    <property type="evidence" value="ECO:0000315"/>
    <property type="project" value="SGD"/>
</dbReference>
<dbReference type="GO" id="GO:0007059">
    <property type="term" value="P:chromosome segregation"/>
    <property type="evidence" value="ECO:0000315"/>
    <property type="project" value="SGD"/>
</dbReference>
<dbReference type="GO" id="GO:0140013">
    <property type="term" value="P:meiotic nuclear division"/>
    <property type="evidence" value="ECO:0000314"/>
    <property type="project" value="SGD"/>
</dbReference>
<dbReference type="GO" id="GO:0051229">
    <property type="term" value="P:meiotic spindle disassembly"/>
    <property type="evidence" value="ECO:0000315"/>
    <property type="project" value="SGD"/>
</dbReference>
<dbReference type="GO" id="GO:0000226">
    <property type="term" value="P:microtubule cytoskeleton organization"/>
    <property type="evidence" value="ECO:0000318"/>
    <property type="project" value="GO_Central"/>
</dbReference>
<dbReference type="GO" id="GO:0000278">
    <property type="term" value="P:mitotic cell cycle"/>
    <property type="evidence" value="ECO:0000315"/>
    <property type="project" value="SGD"/>
</dbReference>
<dbReference type="GO" id="GO:0016479">
    <property type="term" value="P:negative regulation of transcription by RNA polymerase I"/>
    <property type="evidence" value="ECO:0000315"/>
    <property type="project" value="SGD"/>
</dbReference>
<dbReference type="GO" id="GO:2000786">
    <property type="term" value="P:positive regulation of autophagosome assembly"/>
    <property type="evidence" value="ECO:0000315"/>
    <property type="project" value="SGD"/>
</dbReference>
<dbReference type="GO" id="GO:0010508">
    <property type="term" value="P:positive regulation of autophagy"/>
    <property type="evidence" value="ECO:0000314"/>
    <property type="project" value="SGD"/>
</dbReference>
<dbReference type="GO" id="GO:0032467">
    <property type="term" value="P:positive regulation of cytokinesis"/>
    <property type="evidence" value="ECO:0000315"/>
    <property type="project" value="SGD"/>
</dbReference>
<dbReference type="GO" id="GO:1903501">
    <property type="term" value="P:positive regulation of mitotic actomyosin contractile ring assembly"/>
    <property type="evidence" value="ECO:0000315"/>
    <property type="project" value="SGD"/>
</dbReference>
<dbReference type="GO" id="GO:0070550">
    <property type="term" value="P:rDNA chromatin condensation"/>
    <property type="evidence" value="ECO:0000315"/>
    <property type="project" value="SGD"/>
</dbReference>
<dbReference type="GO" id="GO:0000183">
    <property type="term" value="P:rDNA heterochromatin formation"/>
    <property type="evidence" value="ECO:0000303"/>
    <property type="project" value="ComplexPortal"/>
</dbReference>
<dbReference type="GO" id="GO:0007096">
    <property type="term" value="P:regulation of exit from mitosis"/>
    <property type="evidence" value="ECO:0000315"/>
    <property type="project" value="SGD"/>
</dbReference>
<dbReference type="CDD" id="cd14499">
    <property type="entry name" value="CDC14_C"/>
    <property type="match status" value="1"/>
</dbReference>
<dbReference type="CDD" id="cd17657">
    <property type="entry name" value="CDC14_N"/>
    <property type="match status" value="1"/>
</dbReference>
<dbReference type="FunFam" id="3.90.190.10:FF:000038">
    <property type="entry name" value="Tyrosine-protein phosphatase CDC14"/>
    <property type="match status" value="1"/>
</dbReference>
<dbReference type="FunFam" id="3.90.190.10:FF:000073">
    <property type="entry name" value="Tyrosine-protein phosphatase CDC14"/>
    <property type="match status" value="1"/>
</dbReference>
<dbReference type="Gene3D" id="3.90.190.10">
    <property type="entry name" value="Protein tyrosine phosphatase superfamily"/>
    <property type="match status" value="2"/>
</dbReference>
<dbReference type="InterPro" id="IPR044506">
    <property type="entry name" value="CDC14_C"/>
</dbReference>
<dbReference type="InterPro" id="IPR029260">
    <property type="entry name" value="DSPn"/>
</dbReference>
<dbReference type="InterPro" id="IPR000340">
    <property type="entry name" value="Dual-sp_phosphatase_cat-dom"/>
</dbReference>
<dbReference type="InterPro" id="IPR029021">
    <property type="entry name" value="Prot-tyrosine_phosphatase-like"/>
</dbReference>
<dbReference type="InterPro" id="IPR050561">
    <property type="entry name" value="PTP"/>
</dbReference>
<dbReference type="InterPro" id="IPR016130">
    <property type="entry name" value="Tyr_Pase_AS"/>
</dbReference>
<dbReference type="InterPro" id="IPR003595">
    <property type="entry name" value="Tyr_Pase_cat"/>
</dbReference>
<dbReference type="InterPro" id="IPR000387">
    <property type="entry name" value="Tyr_Pase_dom"/>
</dbReference>
<dbReference type="InterPro" id="IPR020422">
    <property type="entry name" value="TYR_PHOSPHATASE_DUAL_dom"/>
</dbReference>
<dbReference type="PANTHER" id="PTHR23339">
    <property type="entry name" value="TYROSINE SPECIFIC PROTEIN PHOSPHATASE AND DUAL SPECIFICITY PROTEIN PHOSPHATASE"/>
    <property type="match status" value="1"/>
</dbReference>
<dbReference type="Pfam" id="PF00782">
    <property type="entry name" value="DSPc"/>
    <property type="match status" value="1"/>
</dbReference>
<dbReference type="Pfam" id="PF14671">
    <property type="entry name" value="DSPn"/>
    <property type="match status" value="1"/>
</dbReference>
<dbReference type="SMART" id="SM00195">
    <property type="entry name" value="DSPc"/>
    <property type="match status" value="1"/>
</dbReference>
<dbReference type="SMART" id="SM00404">
    <property type="entry name" value="PTPc_motif"/>
    <property type="match status" value="1"/>
</dbReference>
<dbReference type="SUPFAM" id="SSF52799">
    <property type="entry name" value="(Phosphotyrosine protein) phosphatases II"/>
    <property type="match status" value="2"/>
</dbReference>
<dbReference type="PROSITE" id="PS00383">
    <property type="entry name" value="TYR_PHOSPHATASE_1"/>
    <property type="match status" value="1"/>
</dbReference>
<dbReference type="PROSITE" id="PS50056">
    <property type="entry name" value="TYR_PHOSPHATASE_2"/>
    <property type="match status" value="1"/>
</dbReference>
<dbReference type="PROSITE" id="PS50054">
    <property type="entry name" value="TYR_PHOSPHATASE_DUAL"/>
    <property type="match status" value="1"/>
</dbReference>
<protein>
    <recommendedName>
        <fullName>Tyrosine-protein phosphatase CDC14</fullName>
        <ecNumber>3.1.3.48</ecNumber>
    </recommendedName>
</protein>
<accession>Q00684</accession>
<accession>D6VTQ8</accession>
<accession>Q05180</accession>
<accession>Q05673</accession>
<name>CDC14_YEAST</name>
<comment type="function">
    <text evidence="4 5 7 8 10 11 12 13 14 15 16 19 20 21 22 23 24 25 26 27 28 29 30 31 32 33 34 35 36 37">Protein phosphatase which antagonizes mitotic cyclin-dependent kinase CDC28, the inactivation of which is essential for exit from mitosis. To access its substrates, is released from nucleolar sequestration during mitosis. Plays an essential in coordinating the nuclear division cycle with cytokinesis through the cytokinesis checkpoint. Involved in chromosome segregation, where it is required for meiosis I spindle dissambly as well as for establishing two consecutive chromosome segregation phases. Allows damaged actomyosin rings to be maintained to facilitate completion of cell division in response to minor perturbation of the cell division machinery. Inhibits transcription of ribosomal genes (rDNA) during anaphase and controls segregation of nucleolus by facilitating condensin targeting to rDNA chromatin in anaphase. Dephosphorylates SIC1, a CDC28 inhibitor, and SWI5, a transcription factor for SIC1, and induces degradation of mitotic cyclins, likely by dephosphorylating the activator of mitotic cyclin degradation, CDH1. Dephosphorylates the microtubule bundling factor ASE1 which is required to define a centered and focused mitotic spindle midzone that can drive continuous spindle elongation. Dephosphorylates the anaphase-promoting complex inhibitor ACM1, leading to its degradation. Facilitates INN1-CYK3 complex formation which promotes cytokinesis through the dephosphorylation of CDC28-phosphosphorylated INN1. Also reverts the inhibitory CDC28 phosphorylation of CHS2 for endoplasmic reticulum export, ensuring that septum formation is contingent upon chromosome separation and exit from mitosis. Additional substrates for CDC14 are the formins BNI1 and BNR1, as well as CDC6, DBP2, DSN1, INCENP, KAR9, MCM3, ORC2, ORC6, SLD2, and SWI6. Activity is inhibited by interaction with NET1 which sequesters it to the nucleolus.</text>
</comment>
<comment type="catalytic activity">
    <reaction evidence="2 9 36">
        <text>O-phospho-L-tyrosyl-[protein] + H2O = L-tyrosyl-[protein] + phosphate</text>
        <dbReference type="Rhea" id="RHEA:10684"/>
        <dbReference type="Rhea" id="RHEA-COMP:10136"/>
        <dbReference type="Rhea" id="RHEA-COMP:20101"/>
        <dbReference type="ChEBI" id="CHEBI:15377"/>
        <dbReference type="ChEBI" id="CHEBI:43474"/>
        <dbReference type="ChEBI" id="CHEBI:46858"/>
        <dbReference type="ChEBI" id="CHEBI:61978"/>
        <dbReference type="EC" id="3.1.3.48"/>
    </reaction>
</comment>
<comment type="biophysicochemical properties">
    <kinetics>
        <KM evidence="36">4 mM for p-nitrophenyl phosphate</KM>
    </kinetics>
    <phDependence>
        <text evidence="36">Optimum pH is 6.9.</text>
    </phDependence>
</comment>
<comment type="subunit">
    <text evidence="4 12 16 17 18 25 37">Component of the RENT (regulator of nucleolar silencing and telophase) complex which is composed of at least NET1, CDC14 and SIR2. Interacts with CDC5, CRM1, SIC1, TOF2 and UTP7.</text>
</comment>
<comment type="interaction">
    <interactant intactId="EBI-4192">
        <id>Q00684</id>
    </interactant>
    <interactant intactId="EBI-26682">
        <id>P35734</id>
        <label>ASK1</label>
    </interactant>
    <organismsDiffer>false</organismsDiffer>
    <experiments>2</experiments>
</comment>
<comment type="interaction">
    <interactant intactId="EBI-4192">
        <id>Q00684</id>
    </interactant>
    <interactant intactId="EBI-3470">
        <id>Q01389</id>
        <label>BCK1</label>
    </interactant>
    <organismsDiffer>false</organismsDiffer>
    <experiments>4</experiments>
</comment>
<comment type="interaction">
    <interactant intactId="EBI-4192">
        <id>Q00684</id>
    </interactant>
    <interactant intactId="EBI-3719">
        <id>P38041</id>
        <label>BOI1</label>
    </interactant>
    <organismsDiffer>false</organismsDiffer>
    <experiments>2</experiments>
</comment>
<comment type="interaction">
    <interactant intactId="EBI-4192">
        <id>Q00684</id>
    </interactant>
    <interactant intactId="EBI-4110">
        <id>P53894</id>
        <label>CBK1</label>
    </interactant>
    <organismsDiffer>false</organismsDiffer>
    <experiments>5</experiments>
</comment>
<comment type="interaction">
    <interactant intactId="EBI-4192">
        <id>Q00684</id>
    </interactant>
    <interactant intactId="EBI-4440">
        <id>P32562</id>
        <label>CDC5</label>
    </interactant>
    <organismsDiffer>false</organismsDiffer>
    <experiments>2</experiments>
</comment>
<comment type="interaction">
    <interactant intactId="EBI-4192">
        <id>Q00684</id>
    </interactant>
    <interactant intactId="EBI-4593">
        <id>P38147</id>
        <label>CHK1</label>
    </interactant>
    <organismsDiffer>false</organismsDiffer>
    <experiments>2</experiments>
</comment>
<comment type="interaction">
    <interactant intactId="EBI-4192">
        <id>Q00684</id>
    </interactant>
    <interactant intactId="EBI-9533">
        <id>P15790</id>
        <label>CKA1</label>
    </interactant>
    <organismsDiffer>false</organismsDiffer>
    <experiments>3</experiments>
</comment>
<comment type="interaction">
    <interactant intactId="EBI-4192">
        <id>Q00684</id>
    </interactant>
    <interactant intactId="EBI-9548">
        <id>P19454</id>
        <label>CKA2</label>
    </interactant>
    <organismsDiffer>false</organismsDiffer>
    <experiments>3</experiments>
</comment>
<comment type="interaction">
    <interactant intactId="EBI-4192">
        <id>Q00684</id>
    </interactant>
    <interactant intactId="EBI-4522">
        <id>P24870</id>
        <label>CLB3</label>
    </interactant>
    <organismsDiffer>false</organismsDiffer>
    <experiments>2</experiments>
</comment>
<comment type="interaction">
    <interactant intactId="EBI-4192">
        <id>Q00684</id>
    </interactant>
    <interactant intactId="EBI-32941">
        <id>Q03898</id>
        <label>FIN1</label>
    </interactant>
    <organismsDiffer>false</organismsDiffer>
    <experiments>2</experiments>
</comment>
<comment type="interaction">
    <interactant intactId="EBI-4192">
        <id>Q00684</id>
    </interactant>
    <interactant intactId="EBI-9664">
        <id>P53233</id>
        <label>FMP48</label>
    </interactant>
    <organismsDiffer>false</organismsDiffer>
    <experiments>2</experiments>
</comment>
<comment type="interaction">
    <interactant intactId="EBI-4192">
        <id>Q00684</id>
    </interactant>
    <interactant intactId="EBI-7575">
        <id>P38785</id>
        <label>GIC1</label>
    </interactant>
    <organismsDiffer>false</organismsDiffer>
    <experiments>2</experiments>
</comment>
<comment type="interaction">
    <interactant intactId="EBI-4192">
        <id>Q00684</id>
    </interactant>
    <interactant intactId="EBI-8571">
        <id>Q12329</id>
        <label>HSP42</label>
    </interactant>
    <organismsDiffer>false</organismsDiffer>
    <experiments>2</experiments>
</comment>
<comment type="interaction">
    <interactant intactId="EBI-4192">
        <id>Q00684</id>
    </interactant>
    <interactant intactId="EBI-10517">
        <id>P21965</id>
        <label>MCK1</label>
    </interactant>
    <organismsDiffer>false</organismsDiffer>
    <experiments>2</experiments>
</comment>
<comment type="interaction">
    <interactant intactId="EBI-4192">
        <id>Q00684</id>
    </interactant>
    <interactant intactId="EBI-9485">
        <id>Q02196</id>
        <label>MET14</label>
    </interactant>
    <organismsDiffer>false</organismsDiffer>
    <experiments>2</experiments>
</comment>
<comment type="interaction">
    <interactant intactId="EBI-4192">
        <id>Q00684</id>
    </interactant>
    <interactant intactId="EBI-25953">
        <id>P47035</id>
        <label>NET1</label>
    </interactant>
    <organismsDiffer>false</organismsDiffer>
    <experiments>14</experiments>
</comment>
<comment type="interaction">
    <interactant intactId="EBI-4192">
        <id>Q00684</id>
    </interactant>
    <interactant intactId="EBI-12588">
        <id>P38826</id>
        <label>ORC6</label>
    </interactant>
    <organismsDiffer>false</organismsDiffer>
    <experiments>2</experiments>
</comment>
<comment type="interaction">
    <interactant intactId="EBI-4192">
        <id>Q00684</id>
    </interactant>
    <interactant intactId="EBI-16219">
        <id>P39940</id>
        <label>RSP5</label>
    </interactant>
    <organismsDiffer>false</organismsDiffer>
    <experiments>2</experiments>
</comment>
<comment type="interaction">
    <interactant intactId="EBI-4192">
        <id>Q00684</id>
    </interactant>
    <interactant intactId="EBI-12863">
        <id>P38990</id>
        <label>SAK1</label>
    </interactant>
    <organismsDiffer>false</organismsDiffer>
    <experiments>2</experiments>
</comment>
<comment type="interaction">
    <interactant intactId="EBI-4192">
        <id>Q00684</id>
    </interactant>
    <interactant intactId="EBI-17127">
        <id>P38634</id>
        <label>SIC1</label>
    </interactant>
    <organismsDiffer>false</organismsDiffer>
    <experiments>2</experiments>
</comment>
<comment type="interaction">
    <interactant intactId="EBI-4192">
        <id>Q00684</id>
    </interactant>
    <interactant intactId="EBI-17219">
        <id>P06700</id>
        <label>SIR2</label>
    </interactant>
    <organismsDiffer>false</organismsDiffer>
    <experiments>6</experiments>
</comment>
<comment type="interaction">
    <interactant intactId="EBI-4192">
        <id>Q00684</id>
    </interactant>
    <interactant intactId="EBI-20842">
        <id>P38283</id>
        <label>SLI15</label>
    </interactant>
    <organismsDiffer>false</organismsDiffer>
    <experiments>2</experiments>
</comment>
<comment type="interaction">
    <interactant intactId="EBI-4192">
        <id>Q00684</id>
    </interactant>
    <interactant intactId="EBI-17516">
        <id>P06782</id>
        <label>SNF1</label>
    </interactant>
    <organismsDiffer>false</organismsDiffer>
    <experiments>2</experiments>
</comment>
<comment type="interaction">
    <interactant intactId="EBI-4192">
        <id>Q00684</id>
    </interactant>
    <interactant intactId="EBI-18389">
        <id>P06784</id>
        <label>STE7</label>
    </interactant>
    <organismsDiffer>false</organismsDiffer>
    <experiments>2</experiments>
</comment>
<comment type="interaction">
    <interactant intactId="EBI-4192">
        <id>Q00684</id>
    </interactant>
    <interactant intactId="EBI-18607">
        <id>P32944</id>
        <label>SWE1</label>
    </interactant>
    <organismsDiffer>false</organismsDiffer>
    <experiments>3</experiments>
</comment>
<comment type="interaction">
    <interactant intactId="EBI-4192">
        <id>Q00684</id>
    </interactant>
    <interactant intactId="EBI-27048">
        <id>Q02208</id>
        <label>TOF2</label>
    </interactant>
    <organismsDiffer>false</organismsDiffer>
    <experiments>9</experiments>
</comment>
<comment type="interaction">
    <interactant intactId="EBI-4192">
        <id>Q00684</id>
    </interactant>
    <interactant intactId="EBI-35568">
        <id>Q03785</id>
        <label>VHS1</label>
    </interactant>
    <organismsDiffer>false</organismsDiffer>
    <experiments>2</experiments>
</comment>
<comment type="subcellular location">
    <subcellularLocation>
        <location>Nucleus</location>
        <location>Nucleolus</location>
    </subcellularLocation>
    <subcellularLocation>
        <location>Cytoplasm</location>
    </subcellularLocation>
    <subcellularLocation>
        <location>Bud neck</location>
    </subcellularLocation>
    <text>Sequestered in the nucleolus for most of the cell cycle by the nucleolar proteins NET1 and TOF2, and is released into the nucleus and cytoplasm during anaphase. CDC55 maintains CDC14 sequestration in the nucleolus during early meiosis, which is essential for the assembly of the meiosis I spindle. In anaphase, the CDC14 early anaphase release (FEAR) network (including CDC5, ESP1, and SLK19), and the mitotic exit network (including the DBF2-MOB1 complex) coordinately trigger the release of CDC14 from the nucleolus.</text>
</comment>
<comment type="miscellaneous">
    <text evidence="6">Present with 8550 molecules/cell in log phase SD medium.</text>
</comment>
<comment type="similarity">
    <text evidence="38">Belongs to the protein-tyrosine phosphatase family. Non-receptor class CDC14 subfamily.</text>
</comment>
<comment type="sequence caution" evidence="38">
    <conflict type="frameshift">
        <sequence resource="EMBL-CDS" id="AAA34477"/>
    </conflict>
</comment>
<comment type="sequence caution" evidence="38">
    <conflict type="frameshift">
        <sequence resource="EMBL-CDS" id="CAA52971"/>
    </conflict>
</comment>
<feature type="chain" id="PRO_0000094875" description="Tyrosine-protein phosphatase CDC14">
    <location>
        <begin position="1"/>
        <end position="551"/>
    </location>
</feature>
<feature type="domain" description="Tyrosine-protein phosphatase" evidence="1">
    <location>
        <begin position="190"/>
        <end position="342"/>
    </location>
</feature>
<feature type="region of interest" description="Disordered" evidence="3">
    <location>
        <begin position="384"/>
        <end position="551"/>
    </location>
</feature>
<feature type="compositionally biased region" description="Polar residues" evidence="3">
    <location>
        <begin position="404"/>
        <end position="455"/>
    </location>
</feature>
<feature type="compositionally biased region" description="Polar residues" evidence="3">
    <location>
        <begin position="505"/>
        <end position="514"/>
    </location>
</feature>
<feature type="active site" description="Phosphocysteine intermediate" evidence="1">
    <location>
        <position position="283"/>
    </location>
</feature>
<feature type="modified residue" description="Phosphoserine" evidence="39 40">
    <location>
        <position position="467"/>
    </location>
</feature>
<feature type="mutagenesis site" description="Inactivates catalytic activity and leads to substrate retention." evidence="25">
    <original>D</original>
    <variation>A</variation>
    <location>
        <position position="253"/>
    </location>
</feature>
<feature type="mutagenesis site" description="Leads to temperature sensitivity." evidence="27">
    <original>A</original>
    <variation>V</variation>
    <location>
        <position position="280"/>
    </location>
</feature>
<feature type="mutagenesis site" description="Inactivates catalytic activity and leads to substrate retention." evidence="25">
    <original>C</original>
    <variation>S</variation>
    <location>
        <position position="283"/>
    </location>
</feature>
<feature type="sequence conflict" description="In Ref. 2; BAA09533." evidence="38" ref="2">
    <original>A</original>
    <variation>P</variation>
    <location>
        <position position="118"/>
    </location>
</feature>
<feature type="strand" evidence="42">
    <location>
        <begin position="10"/>
        <end position="14"/>
    </location>
</feature>
<feature type="turn" evidence="42">
    <location>
        <begin position="15"/>
        <end position="17"/>
    </location>
</feature>
<feature type="strand" evidence="42">
    <location>
        <begin position="18"/>
        <end position="22"/>
    </location>
</feature>
<feature type="strand" evidence="42">
    <location>
        <begin position="31"/>
        <end position="36"/>
    </location>
</feature>
<feature type="turn" evidence="42">
    <location>
        <begin position="39"/>
        <end position="41"/>
    </location>
</feature>
<feature type="strand" evidence="42">
    <location>
        <begin position="47"/>
        <end position="49"/>
    </location>
</feature>
<feature type="helix" evidence="42">
    <location>
        <begin position="56"/>
        <end position="71"/>
    </location>
</feature>
<feature type="helix" evidence="42">
    <location>
        <begin position="73"/>
        <end position="75"/>
    </location>
</feature>
<feature type="strand" evidence="42">
    <location>
        <begin position="78"/>
        <end position="84"/>
    </location>
</feature>
<feature type="helix" evidence="42">
    <location>
        <begin position="88"/>
        <end position="105"/>
    </location>
</feature>
<feature type="helix" evidence="42">
    <location>
        <begin position="110"/>
        <end position="114"/>
    </location>
</feature>
<feature type="helix" evidence="42">
    <location>
        <begin position="115"/>
        <end position="117"/>
    </location>
</feature>
<feature type="strand" evidence="42">
    <location>
        <begin position="130"/>
        <end position="133"/>
    </location>
</feature>
<feature type="helix" evidence="42">
    <location>
        <begin position="141"/>
        <end position="153"/>
    </location>
</feature>
<feature type="turn" evidence="42">
    <location>
        <begin position="159"/>
        <end position="161"/>
    </location>
</feature>
<feature type="helix" evidence="42">
    <location>
        <begin position="164"/>
        <end position="171"/>
    </location>
</feature>
<feature type="helix" evidence="42">
    <location>
        <begin position="173"/>
        <end position="175"/>
    </location>
</feature>
<feature type="strand" evidence="42">
    <location>
        <begin position="178"/>
        <end position="180"/>
    </location>
</feature>
<feature type="strand" evidence="42">
    <location>
        <begin position="182"/>
        <end position="189"/>
    </location>
</feature>
<feature type="helix" evidence="41">
    <location>
        <begin position="199"/>
        <end position="202"/>
    </location>
</feature>
<feature type="helix" evidence="42">
    <location>
        <begin position="209"/>
        <end position="220"/>
    </location>
</feature>
<feature type="strand" evidence="42">
    <location>
        <begin position="223"/>
        <end position="228"/>
    </location>
</feature>
<feature type="helix" evidence="42">
    <location>
        <begin position="237"/>
        <end position="240"/>
    </location>
</feature>
<feature type="turn" evidence="42">
    <location>
        <begin position="241"/>
        <end position="243"/>
    </location>
</feature>
<feature type="strand" evidence="42">
    <location>
        <begin position="245"/>
        <end position="248"/>
    </location>
</feature>
<feature type="helix" evidence="42">
    <location>
        <begin position="259"/>
        <end position="274"/>
    </location>
</feature>
<feature type="strand" evidence="42">
    <location>
        <begin position="278"/>
        <end position="287"/>
    </location>
</feature>
<feature type="helix" evidence="42">
    <location>
        <begin position="288"/>
        <end position="302"/>
    </location>
</feature>
<feature type="helix" evidence="42">
    <location>
        <begin position="306"/>
        <end position="316"/>
    </location>
</feature>
<feature type="helix" evidence="42">
    <location>
        <begin position="324"/>
        <end position="342"/>
    </location>
</feature>
<feature type="strand" evidence="42">
    <location>
        <begin position="343"/>
        <end position="345"/>
    </location>
</feature>
<feature type="helix" evidence="42">
    <location>
        <begin position="351"/>
        <end position="353"/>
    </location>
</feature>
<feature type="strand" evidence="42">
    <location>
        <begin position="359"/>
        <end position="361"/>
    </location>
</feature>
<feature type="helix" evidence="42">
    <location>
        <begin position="362"/>
        <end position="371"/>
    </location>
</feature>
<sequence>MRRSVYLDNTIEFLRGRVYLGAYDYTPEDTDELVFFTVEDAIFYNSFHLDFGPMNIGHLYRFAVIFHEILNDPENANKAVVFYSSASTRQRANAACMLCCYMILVQAWTPHQVLQPLAQVDPPFMPFRDAGYSNADFEITIQDVVYGVWRAKEKGLIDLHSFNLESYEKYEHVEFGDFNVLTPDFIAFASPQEDHPKGYLATKSSHLNQPFKSVLNFFANNNVQLVVRLNSHLYNKKHFEDIGIQHLDLIFEDGTCPDLSIVKNFVGAAETIIKRGGKIAVHCKAGLGRTGCLIGAHLIYTYGFTANECIGFLRFIRPGMVVGPQQHWLYLHQNDFREWKYTTRISLKPSEAIGGLYPLISLEEYRLQKKKLKDDKRVAQNNIEGELRDLTMTPPSNGHGALSARNSSQPSTANNGSNSFKSSAVPQTSPGQPRKGQNGSNTIEDINNNRNPTSHANRKVVIESNNSDDESMQDTNGTSNHYPKVSRKKNDISSASSSRMEDNEPSATNINNAADDTILRQLLPKNRRVTSGRRTTSAAGGIRKISGSIKK</sequence>
<gene>
    <name type="primary">CDC14</name>
    <name type="synonym">OAF3</name>
    <name type="ordered locus">YFR028C</name>
</gene>
<evidence type="ECO:0000255" key="1">
    <source>
        <dbReference type="PROSITE-ProRule" id="PRU00160"/>
    </source>
</evidence>
<evidence type="ECO:0000255" key="2">
    <source>
        <dbReference type="PROSITE-ProRule" id="PRU10044"/>
    </source>
</evidence>
<evidence type="ECO:0000256" key="3">
    <source>
        <dbReference type="SAM" id="MobiDB-lite"/>
    </source>
</evidence>
<evidence type="ECO:0000269" key="4">
    <source>
    </source>
</evidence>
<evidence type="ECO:0000269" key="5">
    <source>
    </source>
</evidence>
<evidence type="ECO:0000269" key="6">
    <source>
    </source>
</evidence>
<evidence type="ECO:0000269" key="7">
    <source>
    </source>
</evidence>
<evidence type="ECO:0000269" key="8">
    <source>
    </source>
</evidence>
<evidence type="ECO:0000269" key="9">
    <source>
    </source>
</evidence>
<evidence type="ECO:0000269" key="10">
    <source>
    </source>
</evidence>
<evidence type="ECO:0000269" key="11">
    <source>
    </source>
</evidence>
<evidence type="ECO:0000269" key="12">
    <source>
    </source>
</evidence>
<evidence type="ECO:0000269" key="13">
    <source>
    </source>
</evidence>
<evidence type="ECO:0000269" key="14">
    <source>
    </source>
</evidence>
<evidence type="ECO:0000269" key="15">
    <source>
    </source>
</evidence>
<evidence type="ECO:0000269" key="16">
    <source>
    </source>
</evidence>
<evidence type="ECO:0000269" key="17">
    <source>
    </source>
</evidence>
<evidence type="ECO:0000269" key="18">
    <source>
    </source>
</evidence>
<evidence type="ECO:0000269" key="19">
    <source>
    </source>
</evidence>
<evidence type="ECO:0000269" key="20">
    <source>
    </source>
</evidence>
<evidence type="ECO:0000269" key="21">
    <source>
    </source>
</evidence>
<evidence type="ECO:0000269" key="22">
    <source>
    </source>
</evidence>
<evidence type="ECO:0000269" key="23">
    <source>
    </source>
</evidence>
<evidence type="ECO:0000269" key="24">
    <source>
    </source>
</evidence>
<evidence type="ECO:0000269" key="25">
    <source>
    </source>
</evidence>
<evidence type="ECO:0000269" key="26">
    <source>
    </source>
</evidence>
<evidence type="ECO:0000269" key="27">
    <source>
    </source>
</evidence>
<evidence type="ECO:0000269" key="28">
    <source>
    </source>
</evidence>
<evidence type="ECO:0000269" key="29">
    <source>
    </source>
</evidence>
<evidence type="ECO:0000269" key="30">
    <source>
    </source>
</evidence>
<evidence type="ECO:0000269" key="31">
    <source>
    </source>
</evidence>
<evidence type="ECO:0000269" key="32">
    <source>
    </source>
</evidence>
<evidence type="ECO:0000269" key="33">
    <source>
    </source>
</evidence>
<evidence type="ECO:0000269" key="34">
    <source>
    </source>
</evidence>
<evidence type="ECO:0000269" key="35">
    <source>
    </source>
</evidence>
<evidence type="ECO:0000269" key="36">
    <source>
    </source>
</evidence>
<evidence type="ECO:0000269" key="37">
    <source>
    </source>
</evidence>
<evidence type="ECO:0000305" key="38"/>
<evidence type="ECO:0007744" key="39">
    <source>
    </source>
</evidence>
<evidence type="ECO:0007744" key="40">
    <source>
    </source>
</evidence>
<evidence type="ECO:0007829" key="41">
    <source>
        <dbReference type="PDB" id="6G84"/>
    </source>
</evidence>
<evidence type="ECO:0007829" key="42">
    <source>
        <dbReference type="PDB" id="6G85"/>
    </source>
</evidence>